<evidence type="ECO:0000250" key="1">
    <source>
        <dbReference type="UniProtKB" id="P03314"/>
    </source>
</evidence>
<evidence type="ECO:0000250" key="2">
    <source>
        <dbReference type="UniProtKB" id="P06935"/>
    </source>
</evidence>
<evidence type="ECO:0000250" key="3">
    <source>
        <dbReference type="UniProtKB" id="P0DOH7"/>
    </source>
</evidence>
<evidence type="ECO:0000250" key="4">
    <source>
        <dbReference type="UniProtKB" id="P0DOH8"/>
    </source>
</evidence>
<evidence type="ECO:0000250" key="5">
    <source>
        <dbReference type="UniProtKB" id="P14335"/>
    </source>
</evidence>
<evidence type="ECO:0000250" key="6">
    <source>
        <dbReference type="UniProtKB" id="P14336"/>
    </source>
</evidence>
<evidence type="ECO:0000250" key="7">
    <source>
        <dbReference type="UniProtKB" id="P17763"/>
    </source>
</evidence>
<evidence type="ECO:0000250" key="8">
    <source>
        <dbReference type="UniProtKB" id="P29990"/>
    </source>
</evidence>
<evidence type="ECO:0000250" key="9">
    <source>
        <dbReference type="UniProtKB" id="Q9Q6P4"/>
    </source>
</evidence>
<evidence type="ECO:0000255" key="10"/>
<evidence type="ECO:0000256" key="11">
    <source>
        <dbReference type="SAM" id="MobiDB-lite"/>
    </source>
</evidence>
<organismHost>
    <name type="scientific">Ardeidae</name>
    <name type="common">herons</name>
    <dbReference type="NCBI Taxonomy" id="8899"/>
</organismHost>
<organismHost>
    <name type="scientific">Bos taurus</name>
    <name type="common">Bovine</name>
    <dbReference type="NCBI Taxonomy" id="9913"/>
</organismHost>
<organismHost>
    <name type="scientific">Culex gelidus</name>
    <dbReference type="NCBI Taxonomy" id="308713"/>
</organismHost>
<organismHost>
    <name type="scientific">Culex tritaeniorhynchus</name>
    <name type="common">Mosquito</name>
    <dbReference type="NCBI Taxonomy" id="7178"/>
</organismHost>
<organismHost>
    <name type="scientific">Equus caballus</name>
    <name type="common">Horse</name>
    <dbReference type="NCBI Taxonomy" id="9796"/>
</organismHost>
<organismHost>
    <name type="scientific">Homo sapiens</name>
    <name type="common">Human</name>
    <dbReference type="NCBI Taxonomy" id="9606"/>
</organismHost>
<organismHost>
    <name type="scientific">Sus scrofa</name>
    <name type="common">Pig</name>
    <dbReference type="NCBI Taxonomy" id="9823"/>
</organismHost>
<dbReference type="SMR" id="P0DOK8"/>
<dbReference type="GO" id="GO:0005576">
    <property type="term" value="C:extracellular region"/>
    <property type="evidence" value="ECO:0007669"/>
    <property type="project" value="UniProtKB-SubCell"/>
</dbReference>
<dbReference type="GO" id="GO:0044167">
    <property type="term" value="C:host cell endoplasmic reticulum membrane"/>
    <property type="evidence" value="ECO:0007669"/>
    <property type="project" value="UniProtKB-SubCell"/>
</dbReference>
<dbReference type="GO" id="GO:0016020">
    <property type="term" value="C:membrane"/>
    <property type="evidence" value="ECO:0007669"/>
    <property type="project" value="UniProtKB-KW"/>
</dbReference>
<dbReference type="GO" id="GO:0019028">
    <property type="term" value="C:viral capsid"/>
    <property type="evidence" value="ECO:0007669"/>
    <property type="project" value="UniProtKB-KW"/>
</dbReference>
<dbReference type="GO" id="GO:0019031">
    <property type="term" value="C:viral envelope"/>
    <property type="evidence" value="ECO:0007669"/>
    <property type="project" value="UniProtKB-KW"/>
</dbReference>
<dbReference type="GO" id="GO:0055036">
    <property type="term" value="C:virion membrane"/>
    <property type="evidence" value="ECO:0007669"/>
    <property type="project" value="UniProtKB-SubCell"/>
</dbReference>
<dbReference type="GO" id="GO:0046983">
    <property type="term" value="F:protein dimerization activity"/>
    <property type="evidence" value="ECO:0007669"/>
    <property type="project" value="InterPro"/>
</dbReference>
<dbReference type="GO" id="GO:0005198">
    <property type="term" value="F:structural molecule activity"/>
    <property type="evidence" value="ECO:0007669"/>
    <property type="project" value="InterPro"/>
</dbReference>
<dbReference type="GO" id="GO:0075512">
    <property type="term" value="P:clathrin-dependent endocytosis of virus by host cell"/>
    <property type="evidence" value="ECO:0007669"/>
    <property type="project" value="UniProtKB-KW"/>
</dbReference>
<dbReference type="GO" id="GO:0039654">
    <property type="term" value="P:fusion of virus membrane with host endosome membrane"/>
    <property type="evidence" value="ECO:0007669"/>
    <property type="project" value="UniProtKB-KW"/>
</dbReference>
<dbReference type="GO" id="GO:0075523">
    <property type="term" value="P:viral translational frameshifting"/>
    <property type="evidence" value="ECO:0007669"/>
    <property type="project" value="UniProtKB-KW"/>
</dbReference>
<dbReference type="GO" id="GO:0019062">
    <property type="term" value="P:virion attachment to host cell"/>
    <property type="evidence" value="ECO:0007669"/>
    <property type="project" value="UniProtKB-KW"/>
</dbReference>
<dbReference type="CDD" id="cd12149">
    <property type="entry name" value="Flavi_E_C"/>
    <property type="match status" value="1"/>
</dbReference>
<dbReference type="CDD" id="cd17038">
    <property type="entry name" value="Flavi_M"/>
    <property type="match status" value="1"/>
</dbReference>
<dbReference type="FunFam" id="1.20.1280.260:FF:000001">
    <property type="entry name" value="Envelope glycoprotein"/>
    <property type="match status" value="1"/>
</dbReference>
<dbReference type="FunFam" id="2.60.40.350:FF:000001">
    <property type="entry name" value="Envelope glycoprotein"/>
    <property type="match status" value="1"/>
</dbReference>
<dbReference type="FunFam" id="2.60.260.50:FF:000001">
    <property type="entry name" value="Genome polyprotein"/>
    <property type="match status" value="1"/>
</dbReference>
<dbReference type="Gene3D" id="1.10.10.930">
    <property type="match status" value="1"/>
</dbReference>
<dbReference type="Gene3D" id="1.20.1280.260">
    <property type="match status" value="1"/>
</dbReference>
<dbReference type="Gene3D" id="2.60.40.350">
    <property type="match status" value="1"/>
</dbReference>
<dbReference type="Gene3D" id="1.10.8.970">
    <property type="entry name" value="Flavivirus envelope glycoprotein M-like"/>
    <property type="match status" value="1"/>
</dbReference>
<dbReference type="Gene3D" id="2.60.260.50">
    <property type="entry name" value="Flavivirus polyprotein propeptide domain"/>
    <property type="match status" value="1"/>
</dbReference>
<dbReference type="Gene3D" id="2.60.98.10">
    <property type="entry name" value="Tick-borne Encephalitis virus Glycoprotein, domain 1"/>
    <property type="match status" value="1"/>
</dbReference>
<dbReference type="Gene3D" id="3.30.67.10">
    <property type="entry name" value="Viral Envelope Glycoprotein, domain 2"/>
    <property type="match status" value="1"/>
</dbReference>
<dbReference type="Gene3D" id="3.30.387.10">
    <property type="entry name" value="Viral Envelope Glycoprotein, domain 3"/>
    <property type="match status" value="1"/>
</dbReference>
<dbReference type="InterPro" id="IPR000069">
    <property type="entry name" value="Env_glycoprot_M_flavivir"/>
</dbReference>
<dbReference type="InterPro" id="IPR038302">
    <property type="entry name" value="Env_glycoprot_M_sf_flavivir"/>
</dbReference>
<dbReference type="InterPro" id="IPR013755">
    <property type="entry name" value="Flav_gly_cen_dom_subdom1"/>
</dbReference>
<dbReference type="InterPro" id="IPR001122">
    <property type="entry name" value="Flavi_capsidC"/>
</dbReference>
<dbReference type="InterPro" id="IPR037172">
    <property type="entry name" value="Flavi_capsidC_sf"/>
</dbReference>
<dbReference type="InterPro" id="IPR027287">
    <property type="entry name" value="Flavi_E_Ig-like"/>
</dbReference>
<dbReference type="InterPro" id="IPR026470">
    <property type="entry name" value="Flavi_E_Stem/Anchor_dom"/>
</dbReference>
<dbReference type="InterPro" id="IPR038345">
    <property type="entry name" value="Flavi_E_Stem/Anchor_dom_sf"/>
</dbReference>
<dbReference type="InterPro" id="IPR011998">
    <property type="entry name" value="Flavi_Glycoprot_E_cen/dimer"/>
</dbReference>
<dbReference type="InterPro" id="IPR001157">
    <property type="entry name" value="Flavi_NS1"/>
</dbReference>
<dbReference type="InterPro" id="IPR002535">
    <property type="entry name" value="Flavi_propep"/>
</dbReference>
<dbReference type="InterPro" id="IPR038688">
    <property type="entry name" value="Flavi_propep_sf"/>
</dbReference>
<dbReference type="InterPro" id="IPR000336">
    <property type="entry name" value="Flavivir/Alphavir_Ig-like_sf"/>
</dbReference>
<dbReference type="InterPro" id="IPR036253">
    <property type="entry name" value="Glycoprot_cen/dimer_sf"/>
</dbReference>
<dbReference type="InterPro" id="IPR038055">
    <property type="entry name" value="Glycoprot_E_dimer_dom"/>
</dbReference>
<dbReference type="InterPro" id="IPR013756">
    <property type="entry name" value="GlyE_cen_dom_subdom2"/>
</dbReference>
<dbReference type="InterPro" id="IPR014756">
    <property type="entry name" value="Ig_E-set"/>
</dbReference>
<dbReference type="NCBIfam" id="TIGR04240">
    <property type="entry name" value="flavi_E_stem"/>
    <property type="match status" value="1"/>
</dbReference>
<dbReference type="Pfam" id="PF01003">
    <property type="entry name" value="Flavi_capsid"/>
    <property type="match status" value="1"/>
</dbReference>
<dbReference type="Pfam" id="PF21659">
    <property type="entry name" value="Flavi_E_stem"/>
    <property type="match status" value="1"/>
</dbReference>
<dbReference type="Pfam" id="PF02832">
    <property type="entry name" value="Flavi_glycop_C"/>
    <property type="match status" value="1"/>
</dbReference>
<dbReference type="Pfam" id="PF00869">
    <property type="entry name" value="Flavi_glycoprot"/>
    <property type="match status" value="1"/>
</dbReference>
<dbReference type="Pfam" id="PF01004">
    <property type="entry name" value="Flavi_M"/>
    <property type="match status" value="1"/>
</dbReference>
<dbReference type="Pfam" id="PF00948">
    <property type="entry name" value="Flavi_NS1"/>
    <property type="match status" value="1"/>
</dbReference>
<dbReference type="Pfam" id="PF01570">
    <property type="entry name" value="Flavi_propep"/>
    <property type="match status" value="1"/>
</dbReference>
<dbReference type="SUPFAM" id="SSF81296">
    <property type="entry name" value="E set domains"/>
    <property type="match status" value="1"/>
</dbReference>
<dbReference type="SUPFAM" id="SSF101257">
    <property type="entry name" value="Flavivirus capsid protein C"/>
    <property type="match status" value="1"/>
</dbReference>
<dbReference type="SUPFAM" id="SSF56983">
    <property type="entry name" value="Viral glycoprotein, central and dimerisation domains"/>
    <property type="match status" value="1"/>
</dbReference>
<sequence length="1198" mass="131476">MTKKPGGPGKNRAINMLKRGLPRVFPLVGVKRVVMSLLDGRGPVRFVLALITFFKFTALAPTKALLGRWRAVEKSVAMKHLTSFKRELGTLIDAVNKRGKKQNKRGGNESSIMWLASLAIVIACAGAMKLSNFQGKLLMTINNTDIADVIVIPTSKGENRCWVRAIDVGYMCEDTITYECPKLAVGNDPEDVDCWCDNQEVYVQYGRCTRTRHSKRSRRSVSVQTHGESSLVNKKEAWLDSTKATRYLMKTENWIIRNPGYAFLAAALGWMLGSNSGQRVVFTILLLLVAPAYSFNCLGMGNRDFIEGASGATWVDLVLEGDSCLTIMANDKPTLDVRMINIEASQLAEVRSYCYHASVTDISTVARCPTTGEAHNEKRADSSYVCKQGFTDRGWGNGCGLFGKGSIDTCAKFSCTSKAIGRTIQPENIKYEVGVFVHGTTTSENHGNYSAQVGASQAAKFTVTPNAPSITLKLGDYGEVTLDCEPRSGLNTEAFYVMTVGSKSFLVHREWFHDLSLPWTSPSSTAWRNRELLMEFEEAHATKQSVVALGSQEGGLHQALAGAIVVEYSSSVKLTSGHLKCRLKMDKLALKGTTYGMCTEKFSFAKNPADTGHGTVVIELTYSGSDGPCKIPIVSVASLNDMTPVGRLVTVNPFVATSSSNSKVLVEMEPPFGDSYIVVGRGDKQINHHWYKAGSTLGKAFSTTLKGAQRLAALGDTAWDFGSIGGVFNSIGKAVHQVFGGAFRTLFGGMSWITQGLMGALLLWMGVNARDRSIALAFLATGGVLVFLATNVHADTGCAIDITRKEMRCGSGIFVHNDVEAWVDRYKYLPETPRSLAKIVHKAHQEGVCGVRSVTRLEHQMWESVRDELNVLLKENAVDLSVVVNKPVGRYRSAPKRLSMTQEKFEMGWKAWGKSILFAPELANSTFVVDGPETKECPDERRAWNSMQIEDFGFGITSTRVWLKIREENTDECDGAIIGTAVKGHVAVHSDLSYWIESRLNDTWKLERAVFGEVKSCTWPETHTLWGDGVEESELIIPHTIAGPRSKHNRREGYKTQNQGPWDENGIVLDFDYCPGTKVTITEDCGKRGPSIRTTTDSGKLITDWCCRSCSLPPLRFRTENGCWYGMEIRPVRHDETTLVRSQVDAFNGEMIDPFSAGPSGDVSGHPGGPSQEVDGQIDDSCGFGGPTCADAWGHHLH</sequence>
<protein>
    <recommendedName>
        <fullName>Structural polyprotein</fullName>
    </recommendedName>
    <component>
        <recommendedName>
            <fullName>Capsid protein C</fullName>
        </recommendedName>
        <alternativeName>
            <fullName>Core protein</fullName>
        </alternativeName>
    </component>
    <component>
        <recommendedName>
            <fullName>Protein prM</fullName>
        </recommendedName>
    </component>
    <component>
        <recommendedName>
            <fullName>Peptide pr</fullName>
        </recommendedName>
    </component>
    <component>
        <recommendedName>
            <fullName>Small envelope protein M</fullName>
        </recommendedName>
        <alternativeName>
            <fullName>Matrix protein</fullName>
        </alternativeName>
    </component>
    <component>
        <recommendedName>
            <fullName>Envelope protein E</fullName>
        </recommendedName>
    </component>
    <component>
        <recommendedName>
            <fullName>Non-structural protein 1'</fullName>
            <shortName>NS1'</shortName>
        </recommendedName>
    </component>
</protein>
<feature type="chain" id="PRO_0000447396" description="Structural polyprotein">
    <location>
        <begin position="1"/>
        <end position="1198"/>
    </location>
</feature>
<feature type="chain" id="PRO_0000447397" description="Capsid protein C">
    <location>
        <begin position="1"/>
        <end position="105"/>
    </location>
</feature>
<feature type="propeptide" id="PRO_0000447398" description="ER anchor for the capsid protein C, removed in mature form by serine protease NS3">
    <location>
        <begin position="106"/>
        <end position="127"/>
    </location>
</feature>
<feature type="chain" id="PRO_0000447399" description="Protein prM">
    <location>
        <begin position="128"/>
        <end position="294"/>
    </location>
</feature>
<feature type="chain" id="PRO_0000447400" description="Peptide pr">
    <location>
        <begin position="128"/>
        <end position="219"/>
    </location>
</feature>
<feature type="chain" id="PRO_0000447401" description="Small envelope protein M">
    <location>
        <begin position="220"/>
        <end position="294"/>
    </location>
</feature>
<feature type="chain" id="PRO_0000447402" description="Envelope protein E">
    <location>
        <begin position="295"/>
        <end position="794"/>
    </location>
</feature>
<feature type="chain" id="PRO_0000447403" description="Non-structural protein 1'">
    <location>
        <begin position="795"/>
        <end position="1198"/>
    </location>
</feature>
<feature type="transmembrane region" description="Helical" evidence="10">
    <location>
        <begin position="110"/>
        <end position="130"/>
    </location>
</feature>
<feature type="transmembrane region" description="Helical" evidence="10">
    <location>
        <begin position="254"/>
        <end position="274"/>
    </location>
</feature>
<feature type="transmembrane region" description="Helical" evidence="4">
    <location>
        <begin position="280"/>
        <end position="294"/>
    </location>
</feature>
<feature type="transmembrane region" description="Helical" evidence="10">
    <location>
        <begin position="747"/>
        <end position="767"/>
    </location>
</feature>
<feature type="transmembrane region" description="Helical" evidence="10">
    <location>
        <begin position="774"/>
        <end position="794"/>
    </location>
</feature>
<feature type="region of interest" description="Interaction with host EXOC1" evidence="2">
    <location>
        <begin position="2"/>
        <end position="15"/>
    </location>
</feature>
<feature type="region of interest" description="Hydrophobic; homodimerization of capsid protein C" evidence="8">
    <location>
        <begin position="37"/>
        <end position="72"/>
    </location>
</feature>
<feature type="region of interest" description="Fusion peptide" evidence="6">
    <location>
        <begin position="392"/>
        <end position="405"/>
    </location>
</feature>
<feature type="region of interest" description="Disordered" evidence="11">
    <location>
        <begin position="1151"/>
        <end position="1178"/>
    </location>
</feature>
<feature type="site" description="Cleavage; by viral protease NS3" evidence="2">
    <location>
        <begin position="105"/>
        <end position="106"/>
    </location>
</feature>
<feature type="site" description="Cleavage; by host signal peptidase" evidence="2">
    <location>
        <begin position="127"/>
        <end position="128"/>
    </location>
</feature>
<feature type="site" description="Cleavage; by host furin" evidence="2">
    <location>
        <begin position="219"/>
        <end position="220"/>
    </location>
</feature>
<feature type="site" description="Cleavage; by host signal peptidase" evidence="2">
    <location>
        <begin position="294"/>
        <end position="295"/>
    </location>
</feature>
<feature type="site" description="Cleavage; by host signal peptidase" evidence="2">
    <location>
        <begin position="794"/>
        <end position="795"/>
    </location>
</feature>
<feature type="glycosylation site" description="N-linked (GlcNAc...) asparagine; by host" evidence="5">
    <location>
        <position position="142"/>
    </location>
</feature>
<feature type="glycosylation site" description="N-linked (GlcNAc...) asparagine; by host" evidence="10">
    <location>
        <position position="448"/>
    </location>
</feature>
<feature type="glycosylation site" description="N-linked (GlcNAc...) asparagine; by host" evidence="9">
    <location>
        <position position="924"/>
    </location>
</feature>
<feature type="glycosylation site" description="N-linked (GlcNAc...) asparagine; by host" evidence="9">
    <location>
        <position position="1001"/>
    </location>
</feature>
<feature type="disulfide bond" evidence="9">
    <location>
        <begin position="297"/>
        <end position="324"/>
    </location>
</feature>
<feature type="disulfide bond" evidence="9">
    <location>
        <begin position="354"/>
        <end position="415"/>
    </location>
</feature>
<feature type="disulfide bond" evidence="2">
    <location>
        <begin position="354"/>
        <end position="410"/>
    </location>
</feature>
<feature type="disulfide bond" evidence="9">
    <location>
        <begin position="368"/>
        <end position="399"/>
    </location>
</feature>
<feature type="disulfide bond" evidence="2">
    <location>
        <begin position="386"/>
        <end position="415"/>
    </location>
</feature>
<feature type="disulfide bond" evidence="9">
    <location>
        <begin position="386"/>
        <end position="410"/>
    </location>
</feature>
<feature type="disulfide bond" evidence="9">
    <location>
        <begin position="484"/>
        <end position="581"/>
    </location>
</feature>
<feature type="disulfide bond" evidence="9">
    <location>
        <begin position="598"/>
        <end position="629"/>
    </location>
</feature>
<feature type="disulfide bond" evidence="9">
    <location>
        <begin position="798"/>
        <end position="809"/>
    </location>
</feature>
<feature type="disulfide bond" evidence="9">
    <location>
        <begin position="849"/>
        <end position="937"/>
    </location>
</feature>
<feature type="disulfide bond" evidence="9">
    <location>
        <begin position="973"/>
        <end position="1017"/>
    </location>
</feature>
<feature type="disulfide bond" evidence="9">
    <location>
        <begin position="1074"/>
        <end position="1123"/>
    </location>
</feature>
<feature type="disulfide bond" evidence="9">
    <location>
        <begin position="1085"/>
        <end position="1106"/>
    </location>
</feature>
<feature type="disulfide bond" evidence="9">
    <location>
        <begin position="1107"/>
        <end position="1110"/>
    </location>
</feature>
<name>POLS_JAEVM</name>
<organism>
    <name type="scientific">Japanese encephalitis virus (strain M28)</name>
    <name type="common">JEV</name>
    <dbReference type="NCBI Taxonomy" id="2555554"/>
    <lineage>
        <taxon>Viruses</taxon>
        <taxon>Riboviria</taxon>
        <taxon>Orthornavirae</taxon>
        <taxon>Kitrinoviricota</taxon>
        <taxon>Flasuviricetes</taxon>
        <taxon>Amarillovirales</taxon>
        <taxon>Flaviviridae</taxon>
        <taxon>Orthoflavivirus</taxon>
        <taxon>Orthoflavivirus japonicum</taxon>
    </lineage>
</organism>
<comment type="function">
    <molecule>Capsid protein C</molecule>
    <text evidence="4 7">Plays a role in virus budding by binding to the cell membrane and gathering the viral RNA into a nucleocapsid that forms the core of a mature virus particle. During virus entry, may induce genome penetration into the host cytoplasm after hemifusion induced by the surface proteins. Can migrate to the cell nucleus where it modulates host functions. Overcomes the anti-viral effects of host EXOC1 by sequestering and degrading the latter through the proteasome degradation pathway (By similarity). Inhibits the integrated stress response (ISR) in the infected cell by binding to host CAPRIN1 (By similarity).</text>
</comment>
<comment type="function">
    <molecule>Capsid protein C</molecule>
    <text evidence="1">Inhibits RNA silencing by interfering with host Dicer.</text>
</comment>
<comment type="function">
    <molecule>Peptide pr</molecule>
    <text evidence="7">Prevents premature fusion activity of envelope proteins in trans-Golgi by binding to envelope protein E at pH6.0. After virion release in extracellular space, gets dissociated from E dimers.</text>
</comment>
<comment type="function">
    <molecule>Protein prM</molecule>
    <text evidence="7">Acts as a chaperone for envelope protein E during intracellular virion assembly by masking and inactivating envelope protein E fusion peptide. prM is the only viral peptide matured by host furin in the trans-Golgi network probably to avoid catastrophic activation of the viral fusion activity in acidic Golgi compartment prior to virion release. prM-E cleavage is inefficient, and many virions are only partially matured. These uncleaved prM would play a role in immune evasion.</text>
</comment>
<comment type="function">
    <molecule>Small envelope protein M</molecule>
    <text evidence="7">May play a role in virus budding. Exerts cytotoxic effects by activating a mitochondrial apoptotic pathway through M ectodomain. May display a viroporin activity.</text>
</comment>
<comment type="function">
    <molecule>Envelope protein E</molecule>
    <text evidence="7">Binds to host cell surface receptor and mediates fusion between viral and cellular membranes. Envelope protein is synthesized in the endoplasmic reticulum in the form of heterodimer with protein prM. They play a role in virion budding in the ER, and the newly formed immature particle is covered with 60 spikes composed of heterodimer between precursor prM and envelope protein E. The virion is transported to the Golgi apparatus where the low pH causes dissociation of PrM-E heterodimers and formation of E homodimers. prM-E cleavage is inefficient, and many virions are only partially matured. These uncleaved prM would play a role in immune evasion.</text>
</comment>
<comment type="subunit">
    <molecule>Capsid protein C</molecule>
    <text evidence="4 7">Homodimer. Interacts (via N-terminus) with host EXOC1 (via C-terminus); this interaction results in EXOC1 degradation through the proteasome degradation pathway (By similarity). Interacts with host CAPRIN1; this interaction is involved in the suppression of the integrated stress response (By similarity).</text>
</comment>
<comment type="subunit">
    <molecule>Protein prM</molecule>
    <text evidence="7">Forms heterodimers with envelope protein E in the endoplasmic reticulum and Golgi.</text>
</comment>
<comment type="subunit">
    <molecule>Envelope protein E</molecule>
    <text evidence="7">Homodimer; in the endoplasmic reticulum and Golgi. Interacts with protein prM. Interacts with non-structural protein 1.</text>
</comment>
<comment type="subcellular location">
    <molecule>Peptide pr</molecule>
    <subcellularLocation>
        <location evidence="7">Secreted</location>
    </subcellularLocation>
</comment>
<comment type="subcellular location">
    <molecule>Small envelope protein M</molecule>
    <subcellularLocation>
        <location evidence="1">Virion membrane</location>
        <topology evidence="1">Multi-pass membrane protein</topology>
    </subcellularLocation>
    <subcellularLocation>
        <location evidence="1">Host endoplasmic reticulum membrane</location>
        <topology evidence="10">Multi-pass membrane protein</topology>
    </subcellularLocation>
    <text evidence="1">ER membrane retention is mediated by the transmembrane domains.</text>
</comment>
<comment type="subcellular location">
    <molecule>Envelope protein E</molecule>
    <subcellularLocation>
        <location evidence="4">Virion membrane</location>
        <topology evidence="1">Multi-pass membrane protein</topology>
    </subcellularLocation>
    <subcellularLocation>
        <location evidence="1">Host endoplasmic reticulum membrane</location>
        <topology evidence="10">Multi-pass membrane protein</topology>
    </subcellularLocation>
    <text evidence="1">ER membrane retention is mediated by the transmembrane domains.</text>
</comment>
<comment type="subcellular location">
    <molecule>Non-structural protein 1'</molecule>
    <subcellularLocation>
        <location evidence="7">Secreted</location>
    </subcellularLocation>
    <subcellularLocation>
        <location evidence="4">Host endoplasmic reticulum membrane</location>
        <topology evidence="4">Peripheral membrane protein</topology>
        <orientation evidence="7">Lumenal side</orientation>
    </subcellularLocation>
    <text evidence="9">Located in RE-derived vesicles hosting the replication complex.</text>
</comment>
<comment type="alternative products">
    <event type="ribosomal frameshifting"/>
    <isoform>
        <id>P0DOK8-1</id>
        <name>Structural polyprotein</name>
        <sequence type="displayed"/>
    </isoform>
    <isoform>
        <id>G3FEX6-1</id>
        <name>Genome polyprotein</name>
        <sequence type="external"/>
    </isoform>
</comment>
<comment type="domain">
    <text evidence="7">The transmembrane domains of the small envelope protein M and envelope protein E contain an endoplasmic reticulum retention signal.</text>
</comment>
<comment type="PTM">
    <text evidence="7">Genome polyprotein: Specific enzymatic cleavages in vivo yield mature proteins. Cleavages in the lumen of endoplasmic reticulum are performed by host signal peptidase, whereas cleavages in the cytoplasmic side are performed by serine protease NS3. Signal cleavage at the 2K-4B site requires a prior NS3 protease-mediated cleavage at the 4A-2K site.</text>
</comment>
<comment type="PTM">
    <molecule>Protein prM</molecule>
    <text evidence="7">Cleaved in post-Golgi vesicles by a host furin, releasing the mature small envelope protein M, and peptide pr. This cleavage is incomplete as up to 30% of viral particles still carry uncleaved prM.</text>
</comment>
<comment type="PTM">
    <molecule>Envelope protein E</molecule>
    <text evidence="7">N-glycosylated.</text>
</comment>
<comment type="miscellaneous">
    <molecule>Isoform Structural polyprotein</molecule>
    <text evidence="3">Product of a -1 ribosomal frameshifting.</text>
</comment>
<accession>P0DOK8</accession>
<keyword id="KW-0167">Capsid protein</keyword>
<keyword id="KW-1165">Clathrin-mediated endocytosis of virus by host</keyword>
<keyword id="KW-0165">Cleavage on pair of basic residues</keyword>
<keyword id="KW-1015">Disulfide bond</keyword>
<keyword id="KW-1170">Fusion of virus membrane with host endosomal membrane</keyword>
<keyword id="KW-1168">Fusion of virus membrane with host membrane</keyword>
<keyword id="KW-0325">Glycoprotein</keyword>
<keyword id="KW-1038">Host endoplasmic reticulum</keyword>
<keyword id="KW-1043">Host membrane</keyword>
<keyword id="KW-0945">Host-virus interaction</keyword>
<keyword id="KW-0472">Membrane</keyword>
<keyword id="KW-0688">Ribosomal frameshifting</keyword>
<keyword id="KW-0964">Secreted</keyword>
<keyword id="KW-0812">Transmembrane</keyword>
<keyword id="KW-1133">Transmembrane helix</keyword>
<keyword id="KW-1161">Viral attachment to host cell</keyword>
<keyword id="KW-0261">Viral envelope protein</keyword>
<keyword id="KW-1162">Viral penetration into host cytoplasm</keyword>
<keyword id="KW-0946">Virion</keyword>
<keyword id="KW-1164">Virus endocytosis by host</keyword>
<keyword id="KW-1160">Virus entry into host cell</keyword>
<reference key="1">
    <citation type="journal article" date="2011" name="J. Virol.">
        <title>Emergence of genotype I of Japanese encephalitis virus as the dominant genotype in Asia.</title>
        <authorList>
            <person name="Pan X.L."/>
            <person name="Liu H."/>
            <person name="Wang H.Y."/>
            <person name="Fu S.H."/>
            <person name="Liu H.Z."/>
            <person name="Zhang H.L."/>
            <person name="Li M.H."/>
            <person name="Gao X.Y."/>
            <person name="Wang J.L."/>
            <person name="Sun X.H."/>
            <person name="Lu X.J."/>
            <person name="Zhai Y.G."/>
            <person name="Meng W.S."/>
            <person name="He Y."/>
            <person name="Wang H.Q."/>
            <person name="Han N."/>
            <person name="Wei B."/>
            <person name="Wu Y.G."/>
            <person name="Feng Y."/>
            <person name="Yang D.J."/>
            <person name="Wang L.H."/>
            <person name="Tang Q."/>
            <person name="Xia G."/>
            <person name="Kurane I."/>
            <person name="Rayner S."/>
            <person name="Liang G.D."/>
        </authorList>
    </citation>
    <scope>NUCLEOTIDE SEQUENCE [LARGE SCALE GENOMIC DNA]</scope>
</reference>
<reference key="2">
    <citation type="journal article" date="2013" name="Zhongguo Ren Shou Gong Huan Bing Za Zhi">
        <title>Genome characterization of the first two genotype I strains of Japanese encephalitis virus in China.</title>
        <authorList>
            <person name="Feng Y."/>
            <person name="Li C."/>
            <person name="Zhang Y.Z."/>
            <person name="Yang W.H."/>
            <person name="Zhang H.L."/>
        </authorList>
    </citation>
    <scope>NUCLEOTIDE SEQUENCE [LARGE SCALE GENOMIC DNA]</scope>
</reference>
<proteinExistence type="inferred from homology"/>